<comment type="function">
    <text evidence="1">Catalyzes the attachment of serine to tRNA(Ser). Is also able to aminoacylate tRNA(Sec) with serine, to form the misacylated tRNA L-seryl-tRNA(Sec), which will be further converted into selenocysteinyl-tRNA(Sec).</text>
</comment>
<comment type="catalytic activity">
    <reaction evidence="1">
        <text>tRNA(Ser) + L-serine + ATP = L-seryl-tRNA(Ser) + AMP + diphosphate + H(+)</text>
        <dbReference type="Rhea" id="RHEA:12292"/>
        <dbReference type="Rhea" id="RHEA-COMP:9669"/>
        <dbReference type="Rhea" id="RHEA-COMP:9703"/>
        <dbReference type="ChEBI" id="CHEBI:15378"/>
        <dbReference type="ChEBI" id="CHEBI:30616"/>
        <dbReference type="ChEBI" id="CHEBI:33019"/>
        <dbReference type="ChEBI" id="CHEBI:33384"/>
        <dbReference type="ChEBI" id="CHEBI:78442"/>
        <dbReference type="ChEBI" id="CHEBI:78533"/>
        <dbReference type="ChEBI" id="CHEBI:456215"/>
        <dbReference type="EC" id="6.1.1.11"/>
    </reaction>
</comment>
<comment type="catalytic activity">
    <reaction evidence="1">
        <text>tRNA(Sec) + L-serine + ATP = L-seryl-tRNA(Sec) + AMP + diphosphate + H(+)</text>
        <dbReference type="Rhea" id="RHEA:42580"/>
        <dbReference type="Rhea" id="RHEA-COMP:9742"/>
        <dbReference type="Rhea" id="RHEA-COMP:10128"/>
        <dbReference type="ChEBI" id="CHEBI:15378"/>
        <dbReference type="ChEBI" id="CHEBI:30616"/>
        <dbReference type="ChEBI" id="CHEBI:33019"/>
        <dbReference type="ChEBI" id="CHEBI:33384"/>
        <dbReference type="ChEBI" id="CHEBI:78442"/>
        <dbReference type="ChEBI" id="CHEBI:78533"/>
        <dbReference type="ChEBI" id="CHEBI:456215"/>
        <dbReference type="EC" id="6.1.1.11"/>
    </reaction>
</comment>
<comment type="pathway">
    <text evidence="1">Aminoacyl-tRNA biosynthesis; selenocysteinyl-tRNA(Sec) biosynthesis; L-seryl-tRNA(Sec) from L-serine and tRNA(Sec): step 1/1.</text>
</comment>
<comment type="subunit">
    <text evidence="1">Homodimer. The tRNA molecule binds across the dimer.</text>
</comment>
<comment type="subcellular location">
    <subcellularLocation>
        <location evidence="1">Cytoplasm</location>
    </subcellularLocation>
</comment>
<comment type="domain">
    <text evidence="1">Consists of two distinct domains, a catalytic core and a N-terminal extension that is involved in tRNA binding.</text>
</comment>
<comment type="similarity">
    <text evidence="1">Belongs to the class-II aminoacyl-tRNA synthetase family. Type-1 seryl-tRNA synthetase subfamily.</text>
</comment>
<protein>
    <recommendedName>
        <fullName evidence="1">Serine--tRNA ligase</fullName>
        <ecNumber evidence="1">6.1.1.11</ecNumber>
    </recommendedName>
    <alternativeName>
        <fullName evidence="1">Seryl-tRNA synthetase</fullName>
        <shortName evidence="1">SerRS</shortName>
    </alternativeName>
    <alternativeName>
        <fullName evidence="1">Seryl-tRNA(Ser/Sec) synthetase</fullName>
    </alternativeName>
</protein>
<dbReference type="EC" id="6.1.1.11" evidence="1"/>
<dbReference type="EMBL" id="CP000312">
    <property type="protein sequence ID" value="ABG85780.1"/>
    <property type="molecule type" value="Genomic_DNA"/>
</dbReference>
<dbReference type="RefSeq" id="WP_011591202.1">
    <property type="nucleotide sequence ID" value="NC_008262.1"/>
</dbReference>
<dbReference type="SMR" id="Q0SWW9"/>
<dbReference type="KEGG" id="cpr:CPR_0014"/>
<dbReference type="UniPathway" id="UPA00906">
    <property type="reaction ID" value="UER00895"/>
</dbReference>
<dbReference type="Proteomes" id="UP000001824">
    <property type="component" value="Chromosome"/>
</dbReference>
<dbReference type="GO" id="GO:0005737">
    <property type="term" value="C:cytoplasm"/>
    <property type="evidence" value="ECO:0007669"/>
    <property type="project" value="UniProtKB-SubCell"/>
</dbReference>
<dbReference type="GO" id="GO:0005524">
    <property type="term" value="F:ATP binding"/>
    <property type="evidence" value="ECO:0007669"/>
    <property type="project" value="UniProtKB-UniRule"/>
</dbReference>
<dbReference type="GO" id="GO:0140096">
    <property type="term" value="F:catalytic activity, acting on a protein"/>
    <property type="evidence" value="ECO:0007669"/>
    <property type="project" value="UniProtKB-ARBA"/>
</dbReference>
<dbReference type="GO" id="GO:0004828">
    <property type="term" value="F:serine-tRNA ligase activity"/>
    <property type="evidence" value="ECO:0007669"/>
    <property type="project" value="UniProtKB-UniRule"/>
</dbReference>
<dbReference type="GO" id="GO:0016740">
    <property type="term" value="F:transferase activity"/>
    <property type="evidence" value="ECO:0007669"/>
    <property type="project" value="UniProtKB-ARBA"/>
</dbReference>
<dbReference type="GO" id="GO:0016260">
    <property type="term" value="P:selenocysteine biosynthetic process"/>
    <property type="evidence" value="ECO:0007669"/>
    <property type="project" value="UniProtKB-UniRule"/>
</dbReference>
<dbReference type="GO" id="GO:0006434">
    <property type="term" value="P:seryl-tRNA aminoacylation"/>
    <property type="evidence" value="ECO:0007669"/>
    <property type="project" value="UniProtKB-UniRule"/>
</dbReference>
<dbReference type="CDD" id="cd00770">
    <property type="entry name" value="SerRS_core"/>
    <property type="match status" value="1"/>
</dbReference>
<dbReference type="Gene3D" id="3.30.930.10">
    <property type="entry name" value="Bira Bifunctional Protein, Domain 2"/>
    <property type="match status" value="1"/>
</dbReference>
<dbReference type="Gene3D" id="1.10.287.40">
    <property type="entry name" value="Serine-tRNA synthetase, tRNA binding domain"/>
    <property type="match status" value="1"/>
</dbReference>
<dbReference type="HAMAP" id="MF_00176">
    <property type="entry name" value="Ser_tRNA_synth_type1"/>
    <property type="match status" value="1"/>
</dbReference>
<dbReference type="InterPro" id="IPR002314">
    <property type="entry name" value="aa-tRNA-synt_IIb"/>
</dbReference>
<dbReference type="InterPro" id="IPR006195">
    <property type="entry name" value="aa-tRNA-synth_II"/>
</dbReference>
<dbReference type="InterPro" id="IPR045864">
    <property type="entry name" value="aa-tRNA-synth_II/BPL/LPL"/>
</dbReference>
<dbReference type="InterPro" id="IPR002317">
    <property type="entry name" value="Ser-tRNA-ligase_type_1"/>
</dbReference>
<dbReference type="InterPro" id="IPR015866">
    <property type="entry name" value="Ser-tRNA-synth_1_N"/>
</dbReference>
<dbReference type="InterPro" id="IPR042103">
    <property type="entry name" value="SerRS_1_N_sf"/>
</dbReference>
<dbReference type="InterPro" id="IPR033729">
    <property type="entry name" value="SerRS_core"/>
</dbReference>
<dbReference type="InterPro" id="IPR010978">
    <property type="entry name" value="tRNA-bd_arm"/>
</dbReference>
<dbReference type="NCBIfam" id="TIGR00414">
    <property type="entry name" value="serS"/>
    <property type="match status" value="1"/>
</dbReference>
<dbReference type="PANTHER" id="PTHR43697:SF1">
    <property type="entry name" value="SERINE--TRNA LIGASE"/>
    <property type="match status" value="1"/>
</dbReference>
<dbReference type="PANTHER" id="PTHR43697">
    <property type="entry name" value="SERYL-TRNA SYNTHETASE"/>
    <property type="match status" value="1"/>
</dbReference>
<dbReference type="Pfam" id="PF02403">
    <property type="entry name" value="Seryl_tRNA_N"/>
    <property type="match status" value="1"/>
</dbReference>
<dbReference type="Pfam" id="PF00587">
    <property type="entry name" value="tRNA-synt_2b"/>
    <property type="match status" value="1"/>
</dbReference>
<dbReference type="PIRSF" id="PIRSF001529">
    <property type="entry name" value="Ser-tRNA-synth_IIa"/>
    <property type="match status" value="1"/>
</dbReference>
<dbReference type="PRINTS" id="PR00981">
    <property type="entry name" value="TRNASYNTHSER"/>
</dbReference>
<dbReference type="SUPFAM" id="SSF55681">
    <property type="entry name" value="Class II aaRS and biotin synthetases"/>
    <property type="match status" value="1"/>
</dbReference>
<dbReference type="SUPFAM" id="SSF46589">
    <property type="entry name" value="tRNA-binding arm"/>
    <property type="match status" value="1"/>
</dbReference>
<dbReference type="PROSITE" id="PS50862">
    <property type="entry name" value="AA_TRNA_LIGASE_II"/>
    <property type="match status" value="1"/>
</dbReference>
<proteinExistence type="inferred from homology"/>
<evidence type="ECO:0000255" key="1">
    <source>
        <dbReference type="HAMAP-Rule" id="MF_00176"/>
    </source>
</evidence>
<feature type="chain" id="PRO_1000019661" description="Serine--tRNA ligase">
    <location>
        <begin position="1"/>
        <end position="425"/>
    </location>
</feature>
<feature type="binding site" evidence="1">
    <location>
        <begin position="233"/>
        <end position="235"/>
    </location>
    <ligand>
        <name>L-serine</name>
        <dbReference type="ChEBI" id="CHEBI:33384"/>
    </ligand>
</feature>
<feature type="binding site" evidence="1">
    <location>
        <begin position="264"/>
        <end position="266"/>
    </location>
    <ligand>
        <name>ATP</name>
        <dbReference type="ChEBI" id="CHEBI:30616"/>
    </ligand>
</feature>
<feature type="binding site" evidence="1">
    <location>
        <position position="287"/>
    </location>
    <ligand>
        <name>L-serine</name>
        <dbReference type="ChEBI" id="CHEBI:33384"/>
    </ligand>
</feature>
<feature type="binding site" evidence="1">
    <location>
        <begin position="351"/>
        <end position="354"/>
    </location>
    <ligand>
        <name>ATP</name>
        <dbReference type="ChEBI" id="CHEBI:30616"/>
    </ligand>
</feature>
<feature type="binding site" evidence="1">
    <location>
        <position position="387"/>
    </location>
    <ligand>
        <name>L-serine</name>
        <dbReference type="ChEBI" id="CHEBI:33384"/>
    </ligand>
</feature>
<keyword id="KW-0030">Aminoacyl-tRNA synthetase</keyword>
<keyword id="KW-0067">ATP-binding</keyword>
<keyword id="KW-0963">Cytoplasm</keyword>
<keyword id="KW-0436">Ligase</keyword>
<keyword id="KW-0547">Nucleotide-binding</keyword>
<keyword id="KW-0648">Protein biosynthesis</keyword>
<accession>Q0SWW9</accession>
<gene>
    <name evidence="1" type="primary">serS</name>
    <name type="ordered locus">CPR_0014</name>
</gene>
<sequence length="425" mass="48412">MLDLKKLRSNTEEVKKALSNRGEDFDVNVIDEVIALDEERRKILVDVEALKKQRNEVSAEIPKRKKAGEDVTEVMAEMREIGDKIKADDAKVAELNDKINYIMLRIPNIPNPAVPEGETDEDNVEIKRWGEPTKFNFEPKAHWDLGTDLDLLDFERGGKIAGSRFTVYKGMGARLERSIINYFLDKHTFENGYTEVLPPYMVNRDSMTGTGQLPKFEEDAFKVENNGYFLIPTAEVPVTNMYRNETLEGDKLPIKHAAYSACFRAEAGSAGRDTRGLIRQHQFNKVELVKFCKPEQSYEELDKLVQDAESVLQGLGLPYRIVRICKGDLGFTAALKYDIEVWMPSYNRYVEISSCSNFEDFQARRANIKYKNSPKEKPQFVHTLNGSGVAIGRTVAAILENYQQEDGSVVIPEALKEYMRCDLLK</sequence>
<reference key="1">
    <citation type="journal article" date="2006" name="Genome Res.">
        <title>Skewed genomic variability in strains of the toxigenic bacterial pathogen, Clostridium perfringens.</title>
        <authorList>
            <person name="Myers G.S.A."/>
            <person name="Rasko D.A."/>
            <person name="Cheung J.K."/>
            <person name="Ravel J."/>
            <person name="Seshadri R."/>
            <person name="DeBoy R.T."/>
            <person name="Ren Q."/>
            <person name="Varga J."/>
            <person name="Awad M.M."/>
            <person name="Brinkac L.M."/>
            <person name="Daugherty S.C."/>
            <person name="Haft D.H."/>
            <person name="Dodson R.J."/>
            <person name="Madupu R."/>
            <person name="Nelson W.C."/>
            <person name="Rosovitz M.J."/>
            <person name="Sullivan S.A."/>
            <person name="Khouri H."/>
            <person name="Dimitrov G.I."/>
            <person name="Watkins K.L."/>
            <person name="Mulligan S."/>
            <person name="Benton J."/>
            <person name="Radune D."/>
            <person name="Fisher D.J."/>
            <person name="Atkins H.S."/>
            <person name="Hiscox T."/>
            <person name="Jost B.H."/>
            <person name="Billington S.J."/>
            <person name="Songer J.G."/>
            <person name="McClane B.A."/>
            <person name="Titball R.W."/>
            <person name="Rood J.I."/>
            <person name="Melville S.B."/>
            <person name="Paulsen I.T."/>
        </authorList>
    </citation>
    <scope>NUCLEOTIDE SEQUENCE [LARGE SCALE GENOMIC DNA]</scope>
    <source>
        <strain>SM101 / Type A</strain>
    </source>
</reference>
<name>SYS_CLOPS</name>
<organism>
    <name type="scientific">Clostridium perfringens (strain SM101 / Type A)</name>
    <dbReference type="NCBI Taxonomy" id="289380"/>
    <lineage>
        <taxon>Bacteria</taxon>
        <taxon>Bacillati</taxon>
        <taxon>Bacillota</taxon>
        <taxon>Clostridia</taxon>
        <taxon>Eubacteriales</taxon>
        <taxon>Clostridiaceae</taxon>
        <taxon>Clostridium</taxon>
    </lineage>
</organism>